<proteinExistence type="inferred from homology"/>
<organism>
    <name type="scientific">Vibrio atlanticus (strain LGP32)</name>
    <name type="common">Vibrio splendidus (strain Mel32)</name>
    <dbReference type="NCBI Taxonomy" id="575788"/>
    <lineage>
        <taxon>Bacteria</taxon>
        <taxon>Pseudomonadati</taxon>
        <taxon>Pseudomonadota</taxon>
        <taxon>Gammaproteobacteria</taxon>
        <taxon>Vibrionales</taxon>
        <taxon>Vibrionaceae</taxon>
        <taxon>Vibrio</taxon>
    </lineage>
</organism>
<name>FTHS_VIBA3</name>
<protein>
    <recommendedName>
        <fullName evidence="1">Formate--tetrahydrofolate ligase</fullName>
        <ecNumber evidence="1">6.3.4.3</ecNumber>
    </recommendedName>
    <alternativeName>
        <fullName evidence="1">Formyltetrahydrofolate synthetase</fullName>
        <shortName evidence="1">FHS</shortName>
        <shortName evidence="1">FTHFS</shortName>
    </alternativeName>
</protein>
<reference key="1">
    <citation type="submission" date="2009-02" db="EMBL/GenBank/DDBJ databases">
        <title>Vibrio splendidus str. LGP32 complete genome.</title>
        <authorList>
            <person name="Mazel D."/>
            <person name="Le Roux F."/>
        </authorList>
    </citation>
    <scope>NUCLEOTIDE SEQUENCE [LARGE SCALE GENOMIC DNA]</scope>
    <source>
        <strain>LGP32</strain>
    </source>
</reference>
<comment type="catalytic activity">
    <reaction evidence="1">
        <text>(6S)-5,6,7,8-tetrahydrofolate + formate + ATP = (6R)-10-formyltetrahydrofolate + ADP + phosphate</text>
        <dbReference type="Rhea" id="RHEA:20221"/>
        <dbReference type="ChEBI" id="CHEBI:15740"/>
        <dbReference type="ChEBI" id="CHEBI:30616"/>
        <dbReference type="ChEBI" id="CHEBI:43474"/>
        <dbReference type="ChEBI" id="CHEBI:57453"/>
        <dbReference type="ChEBI" id="CHEBI:195366"/>
        <dbReference type="ChEBI" id="CHEBI:456216"/>
        <dbReference type="EC" id="6.3.4.3"/>
    </reaction>
</comment>
<comment type="pathway">
    <text evidence="1">One-carbon metabolism; tetrahydrofolate interconversion.</text>
</comment>
<comment type="similarity">
    <text evidence="1">Belongs to the formate--tetrahydrofolate ligase family.</text>
</comment>
<feature type="chain" id="PRO_1000185271" description="Formate--tetrahydrofolate ligase">
    <location>
        <begin position="1"/>
        <end position="582"/>
    </location>
</feature>
<feature type="binding site" evidence="1">
    <location>
        <begin position="65"/>
        <end position="72"/>
    </location>
    <ligand>
        <name>ATP</name>
        <dbReference type="ChEBI" id="CHEBI:30616"/>
    </ligand>
</feature>
<accession>B7VSJ2</accession>
<sequence length="582" mass="62374">MLSDIDICRSTPLKNISEVAKQAGLHHNEHQPLGQYKSKVSLTSLERLASQQDGKLVVVTAITPTPLGEGKTVTTIGLAQGLAKINQSAMACIRQPSMGPVFGVKGGAAGGGYSQVAPMEQLNLHLTGDIHAVTVAHNLASAAIDARLYHEQREGLEAFEARSGLKALDIDPRRIVWRRVLDHNDRALRMITVGKNEADKTINGFEREDGFDISAASELMAILALTDDLQDLRKRIGRVVLAYNNQGLPLTADDFNVAGAMTVTMKDSIEPTLMQTLEGVPTLIHAGPFANIAHGNSSIIADKIALKLSDFVVTEGGFGSDMGFEKACNIKVKASNKKPDCAVIVATLRGLKANSGLYDLRPGTPLPDSIFNDDQDALIAGFENLKWHINNVKQYQVPTVVAINRFPQDSAQELNALKQMITDFDPSVSVEVSEAFGQGGEGATQLAHAVVKACQKQSEFKPLYHSEQSLEEKLMAVAEVGYGAASISLSPLAKKQLAEFKLHGYSDLSVCLAKTPLSISTEAHIKGAPSQFDVPVRELKLCAGAGFIYALCGNVMTMPGLPDKPAFMSLDIDSKGNIVGLS</sequence>
<gene>
    <name evidence="1" type="primary">fhs</name>
    <name type="ordered locus">VS_II0809</name>
</gene>
<keyword id="KW-0067">ATP-binding</keyword>
<keyword id="KW-0436">Ligase</keyword>
<keyword id="KW-0547">Nucleotide-binding</keyword>
<keyword id="KW-0554">One-carbon metabolism</keyword>
<evidence type="ECO:0000255" key="1">
    <source>
        <dbReference type="HAMAP-Rule" id="MF_01543"/>
    </source>
</evidence>
<dbReference type="EC" id="6.3.4.3" evidence="1"/>
<dbReference type="EMBL" id="FM954973">
    <property type="protein sequence ID" value="CAV26568.1"/>
    <property type="molecule type" value="Genomic_DNA"/>
</dbReference>
<dbReference type="SMR" id="B7VSJ2"/>
<dbReference type="STRING" id="575788.VS_II0809"/>
<dbReference type="KEGG" id="vsp:VS_II0809"/>
<dbReference type="PATRIC" id="fig|575788.5.peg.764"/>
<dbReference type="eggNOG" id="COG2759">
    <property type="taxonomic scope" value="Bacteria"/>
</dbReference>
<dbReference type="HOGENOM" id="CLU_003601_3_3_6"/>
<dbReference type="UniPathway" id="UPA00193"/>
<dbReference type="Proteomes" id="UP000009100">
    <property type="component" value="Chromosome 2"/>
</dbReference>
<dbReference type="GO" id="GO:0005524">
    <property type="term" value="F:ATP binding"/>
    <property type="evidence" value="ECO:0007669"/>
    <property type="project" value="UniProtKB-UniRule"/>
</dbReference>
<dbReference type="GO" id="GO:0004329">
    <property type="term" value="F:formate-tetrahydrofolate ligase activity"/>
    <property type="evidence" value="ECO:0007669"/>
    <property type="project" value="UniProtKB-UniRule"/>
</dbReference>
<dbReference type="GO" id="GO:0035999">
    <property type="term" value="P:tetrahydrofolate interconversion"/>
    <property type="evidence" value="ECO:0007669"/>
    <property type="project" value="UniProtKB-UniRule"/>
</dbReference>
<dbReference type="CDD" id="cd00477">
    <property type="entry name" value="FTHFS"/>
    <property type="match status" value="1"/>
</dbReference>
<dbReference type="FunFam" id="3.30.1510.10:FF:000001">
    <property type="entry name" value="Formate--tetrahydrofolate ligase"/>
    <property type="match status" value="1"/>
</dbReference>
<dbReference type="Gene3D" id="3.30.1510.10">
    <property type="entry name" value="Domain 2, N(10)-formyltetrahydrofolate synthetase"/>
    <property type="match status" value="1"/>
</dbReference>
<dbReference type="Gene3D" id="3.10.410.10">
    <property type="entry name" value="Formyltetrahydrofolate synthetase, domain 3"/>
    <property type="match status" value="1"/>
</dbReference>
<dbReference type="Gene3D" id="3.40.50.300">
    <property type="entry name" value="P-loop containing nucleotide triphosphate hydrolases"/>
    <property type="match status" value="1"/>
</dbReference>
<dbReference type="HAMAP" id="MF_01543">
    <property type="entry name" value="FTHFS"/>
    <property type="match status" value="1"/>
</dbReference>
<dbReference type="InterPro" id="IPR000559">
    <property type="entry name" value="Formate_THF_ligase"/>
</dbReference>
<dbReference type="InterPro" id="IPR020628">
    <property type="entry name" value="Formate_THF_ligase_CS"/>
</dbReference>
<dbReference type="InterPro" id="IPR027417">
    <property type="entry name" value="P-loop_NTPase"/>
</dbReference>
<dbReference type="NCBIfam" id="NF010030">
    <property type="entry name" value="PRK13505.1"/>
    <property type="match status" value="1"/>
</dbReference>
<dbReference type="NCBIfam" id="NF010031">
    <property type="entry name" value="PRK13506.1"/>
    <property type="match status" value="1"/>
</dbReference>
<dbReference type="Pfam" id="PF01268">
    <property type="entry name" value="FTHFS"/>
    <property type="match status" value="1"/>
</dbReference>
<dbReference type="SUPFAM" id="SSF52540">
    <property type="entry name" value="P-loop containing nucleoside triphosphate hydrolases"/>
    <property type="match status" value="1"/>
</dbReference>
<dbReference type="PROSITE" id="PS00721">
    <property type="entry name" value="FTHFS_1"/>
    <property type="match status" value="1"/>
</dbReference>
<dbReference type="PROSITE" id="PS00722">
    <property type="entry name" value="FTHFS_2"/>
    <property type="match status" value="1"/>
</dbReference>